<reference key="1">
    <citation type="journal article" date="2002" name="Nature">
        <title>The genome sequence of Schizosaccharomyces pombe.</title>
        <authorList>
            <person name="Wood V."/>
            <person name="Gwilliam R."/>
            <person name="Rajandream M.A."/>
            <person name="Lyne M.H."/>
            <person name="Lyne R."/>
            <person name="Stewart A."/>
            <person name="Sgouros J.G."/>
            <person name="Peat N."/>
            <person name="Hayles J."/>
            <person name="Baker S.G."/>
            <person name="Basham D."/>
            <person name="Bowman S."/>
            <person name="Brooks K."/>
            <person name="Brown D."/>
            <person name="Brown S."/>
            <person name="Chillingworth T."/>
            <person name="Churcher C.M."/>
            <person name="Collins M."/>
            <person name="Connor R."/>
            <person name="Cronin A."/>
            <person name="Davis P."/>
            <person name="Feltwell T."/>
            <person name="Fraser A."/>
            <person name="Gentles S."/>
            <person name="Goble A."/>
            <person name="Hamlin N."/>
            <person name="Harris D.E."/>
            <person name="Hidalgo J."/>
            <person name="Hodgson G."/>
            <person name="Holroyd S."/>
            <person name="Hornsby T."/>
            <person name="Howarth S."/>
            <person name="Huckle E.J."/>
            <person name="Hunt S."/>
            <person name="Jagels K."/>
            <person name="James K.D."/>
            <person name="Jones L."/>
            <person name="Jones M."/>
            <person name="Leather S."/>
            <person name="McDonald S."/>
            <person name="McLean J."/>
            <person name="Mooney P."/>
            <person name="Moule S."/>
            <person name="Mungall K.L."/>
            <person name="Murphy L.D."/>
            <person name="Niblett D."/>
            <person name="Odell C."/>
            <person name="Oliver K."/>
            <person name="O'Neil S."/>
            <person name="Pearson D."/>
            <person name="Quail M.A."/>
            <person name="Rabbinowitsch E."/>
            <person name="Rutherford K.M."/>
            <person name="Rutter S."/>
            <person name="Saunders D."/>
            <person name="Seeger K."/>
            <person name="Sharp S."/>
            <person name="Skelton J."/>
            <person name="Simmonds M.N."/>
            <person name="Squares R."/>
            <person name="Squares S."/>
            <person name="Stevens K."/>
            <person name="Taylor K."/>
            <person name="Taylor R.G."/>
            <person name="Tivey A."/>
            <person name="Walsh S.V."/>
            <person name="Warren T."/>
            <person name="Whitehead S."/>
            <person name="Woodward J.R."/>
            <person name="Volckaert G."/>
            <person name="Aert R."/>
            <person name="Robben J."/>
            <person name="Grymonprez B."/>
            <person name="Weltjens I."/>
            <person name="Vanstreels E."/>
            <person name="Rieger M."/>
            <person name="Schaefer M."/>
            <person name="Mueller-Auer S."/>
            <person name="Gabel C."/>
            <person name="Fuchs M."/>
            <person name="Duesterhoeft A."/>
            <person name="Fritzc C."/>
            <person name="Holzer E."/>
            <person name="Moestl D."/>
            <person name="Hilbert H."/>
            <person name="Borzym K."/>
            <person name="Langer I."/>
            <person name="Beck A."/>
            <person name="Lehrach H."/>
            <person name="Reinhardt R."/>
            <person name="Pohl T.M."/>
            <person name="Eger P."/>
            <person name="Zimmermann W."/>
            <person name="Wedler H."/>
            <person name="Wambutt R."/>
            <person name="Purnelle B."/>
            <person name="Goffeau A."/>
            <person name="Cadieu E."/>
            <person name="Dreano S."/>
            <person name="Gloux S."/>
            <person name="Lelaure V."/>
            <person name="Mottier S."/>
            <person name="Galibert F."/>
            <person name="Aves S.J."/>
            <person name="Xiang Z."/>
            <person name="Hunt C."/>
            <person name="Moore K."/>
            <person name="Hurst S.M."/>
            <person name="Lucas M."/>
            <person name="Rochet M."/>
            <person name="Gaillardin C."/>
            <person name="Tallada V.A."/>
            <person name="Garzon A."/>
            <person name="Thode G."/>
            <person name="Daga R.R."/>
            <person name="Cruzado L."/>
            <person name="Jimenez J."/>
            <person name="Sanchez M."/>
            <person name="del Rey F."/>
            <person name="Benito J."/>
            <person name="Dominguez A."/>
            <person name="Revuelta J.L."/>
            <person name="Moreno S."/>
            <person name="Armstrong J."/>
            <person name="Forsburg S.L."/>
            <person name="Cerutti L."/>
            <person name="Lowe T."/>
            <person name="McCombie W.R."/>
            <person name="Paulsen I."/>
            <person name="Potashkin J."/>
            <person name="Shpakovski G.V."/>
            <person name="Ussery D."/>
            <person name="Barrell B.G."/>
            <person name="Nurse P."/>
        </authorList>
    </citation>
    <scope>NUCLEOTIDE SEQUENCE [LARGE SCALE GENOMIC DNA]</scope>
    <source>
        <strain>972 / ATCC 24843</strain>
    </source>
</reference>
<reference key="2">
    <citation type="journal article" date="2011" name="Science">
        <title>Comparative functional genomics of the fission yeasts.</title>
        <authorList>
            <person name="Rhind N."/>
            <person name="Chen Z."/>
            <person name="Yassour M."/>
            <person name="Thompson D.A."/>
            <person name="Haas B.J."/>
            <person name="Habib N."/>
            <person name="Wapinski I."/>
            <person name="Roy S."/>
            <person name="Lin M.F."/>
            <person name="Heiman D.I."/>
            <person name="Young S.K."/>
            <person name="Furuya K."/>
            <person name="Guo Y."/>
            <person name="Pidoux A."/>
            <person name="Chen H.M."/>
            <person name="Robbertse B."/>
            <person name="Goldberg J.M."/>
            <person name="Aoki K."/>
            <person name="Bayne E.H."/>
            <person name="Berlin A.M."/>
            <person name="Desjardins C.A."/>
            <person name="Dobbs E."/>
            <person name="Dukaj L."/>
            <person name="Fan L."/>
            <person name="FitzGerald M.G."/>
            <person name="French C."/>
            <person name="Gujja S."/>
            <person name="Hansen K."/>
            <person name="Keifenheim D."/>
            <person name="Levin J.Z."/>
            <person name="Mosher R.A."/>
            <person name="Mueller C.A."/>
            <person name="Pfiffner J."/>
            <person name="Priest M."/>
            <person name="Russ C."/>
            <person name="Smialowska A."/>
            <person name="Swoboda P."/>
            <person name="Sykes S.M."/>
            <person name="Vaughn M."/>
            <person name="Vengrova S."/>
            <person name="Yoder R."/>
            <person name="Zeng Q."/>
            <person name="Allshire R."/>
            <person name="Baulcombe D."/>
            <person name="Birren B.W."/>
            <person name="Brown W."/>
            <person name="Ekwall K."/>
            <person name="Kellis M."/>
            <person name="Leatherwood J."/>
            <person name="Levin H."/>
            <person name="Margalit H."/>
            <person name="Martienssen R."/>
            <person name="Nieduszynski C.A."/>
            <person name="Spatafora J.W."/>
            <person name="Friedman N."/>
            <person name="Dalgaard J.Z."/>
            <person name="Baumann P."/>
            <person name="Niki H."/>
            <person name="Regev A."/>
            <person name="Nusbaum C."/>
        </authorList>
    </citation>
    <scope>REVISION OF GENE MODEL</scope>
</reference>
<reference key="3">
    <citation type="journal article" date="2006" name="Nat. Biotechnol.">
        <title>ORFeome cloning and global analysis of protein localization in the fission yeast Schizosaccharomyces pombe.</title>
        <authorList>
            <person name="Matsuyama A."/>
            <person name="Arai R."/>
            <person name="Yashiroda Y."/>
            <person name="Shirai A."/>
            <person name="Kamata A."/>
            <person name="Sekido S."/>
            <person name="Kobayashi Y."/>
            <person name="Hashimoto A."/>
            <person name="Hamamoto M."/>
            <person name="Hiraoka Y."/>
            <person name="Horinouchi S."/>
            <person name="Yoshida M."/>
        </authorList>
    </citation>
    <scope>SUBCELLULAR LOCATION [LARGE SCALE ANALYSIS]</scope>
</reference>
<reference key="4">
    <citation type="journal article" date="2008" name="J. Proteome Res.">
        <title>Phosphoproteome analysis of fission yeast.</title>
        <authorList>
            <person name="Wilson-Grady J.T."/>
            <person name="Villen J."/>
            <person name="Gygi S.P."/>
        </authorList>
    </citation>
    <scope>PHOSPHORYLATION [LARGE SCALE ANALYSIS] AT SER-248; SER-249; SER-251; SER-253; SER-366; THR-369; THR-433; SER-435; SER-449; SER-471 AND TYR-474</scope>
    <scope>IDENTIFICATION BY MASS SPECTROMETRY</scope>
</reference>
<protein>
    <recommendedName>
        <fullName>General negative regulator of transcription subunit 3</fullName>
    </recommendedName>
</protein>
<comment type="function">
    <text evidence="1">Acts as a component of the CCR4-NOT core complex, which in the nucleus seems to be a general transcription factor, and in the cytoplasm the major mRNA deadenylase involved in mRNA turnover. The NOT protein subcomplex negatively regulates the basal and activated transcription of many genes. Preferentially affects TC-type TATA element-dependent transcription. Could directly or indirectly inhibit component(s) of the general transcription machinery (By similarity).</text>
</comment>
<comment type="subcellular location">
    <subcellularLocation>
        <location evidence="4">Cytoplasm</location>
    </subcellularLocation>
    <subcellularLocation>
        <location evidence="7">Nucleus</location>
    </subcellularLocation>
</comment>
<comment type="similarity">
    <text evidence="6">Belongs to the CNOT2/3/5 family.</text>
</comment>
<sequence>MSARKLQVEIEKTFKKVTDGIAIFDEVYEKLSASNSVSQKEKLEGDLKTQIKKLQRLRDQIKTWASSNDIKDKKALLENRRLIEAKMEEFKAVEREMKIKAFSKEGLSIASKLDPKEKEKQDTIQWISNAVEELERQAELIEAEAESLKATFKRGKKDLSKLSHLSELESRIERHKWHQDKLELIMRRLENSQISPEAVNDIQEDIMYYVECSQSEDFAEDENLYDELNLDEASASYDAERSGRSSSSSHSPSPSASSSSSSENLLQDKAEAEEKVSADASVQDIAEKESLDADKELATNDQEDDEEENQAETQKDGAISNNENMQSEVQTTNPSASTSAVTNITKPTLIQNPSTPLSVSNSKVASPETPNATHTAPKVEMRYASAAAAAAAALAKESPSHHYIMQQVRPETPNSPRLNSTVIQSKWDSLGHTASPKMQTQPVRSVSQSSATTETNVKPTKEENADVPVSSPDYLKDLVNALNTSKEQHKGAIDKEKLTEALNISCVYVPDATDAAKPQYYIPKDPYPVPHYYPQQPLPLFDSSEMTELVDPDTLFYMFYYRPGTYQQYIAGQELKKQSWRFHKKYTTWFQRHEEPKMITDEFESGSYRYFDFEGDWVQRKKADFRFTYQYLEDDDDWTR</sequence>
<name>NOT3_SCHPO</name>
<keyword id="KW-0010">Activator</keyword>
<keyword id="KW-0175">Coiled coil</keyword>
<keyword id="KW-0963">Cytoplasm</keyword>
<keyword id="KW-0539">Nucleus</keyword>
<keyword id="KW-0597">Phosphoprotein</keyword>
<keyword id="KW-1185">Reference proteome</keyword>
<keyword id="KW-0678">Repressor</keyword>
<keyword id="KW-0804">Transcription</keyword>
<keyword id="KW-0805">Transcription regulation</keyword>
<feature type="chain" id="PRO_0000317310" description="General negative regulator of transcription subunit 3">
    <location>
        <begin position="1"/>
        <end position="640"/>
    </location>
</feature>
<feature type="region of interest" description="Disordered" evidence="3">
    <location>
        <begin position="235"/>
        <end position="374"/>
    </location>
</feature>
<feature type="region of interest" description="Disordered" evidence="3">
    <location>
        <begin position="432"/>
        <end position="471"/>
    </location>
</feature>
<feature type="coiled-coil region" evidence="2">
    <location>
        <begin position="37"/>
        <end position="162"/>
    </location>
</feature>
<feature type="coiled-coil region" evidence="2">
    <location>
        <begin position="287"/>
        <end position="331"/>
    </location>
</feature>
<feature type="compositionally biased region" description="Low complexity" evidence="3">
    <location>
        <begin position="245"/>
        <end position="262"/>
    </location>
</feature>
<feature type="compositionally biased region" description="Basic and acidic residues" evidence="3">
    <location>
        <begin position="266"/>
        <end position="277"/>
    </location>
</feature>
<feature type="compositionally biased region" description="Basic and acidic residues" evidence="3">
    <location>
        <begin position="285"/>
        <end position="298"/>
    </location>
</feature>
<feature type="compositionally biased region" description="Acidic residues" evidence="3">
    <location>
        <begin position="301"/>
        <end position="310"/>
    </location>
</feature>
<feature type="compositionally biased region" description="Polar residues" evidence="3">
    <location>
        <begin position="319"/>
        <end position="374"/>
    </location>
</feature>
<feature type="compositionally biased region" description="Polar residues" evidence="3">
    <location>
        <begin position="436"/>
        <end position="458"/>
    </location>
</feature>
<feature type="modified residue" description="Phosphoserine" evidence="5">
    <location>
        <position position="248"/>
    </location>
</feature>
<feature type="modified residue" description="Phosphoserine" evidence="5">
    <location>
        <position position="249"/>
    </location>
</feature>
<feature type="modified residue" description="Phosphoserine" evidence="5">
    <location>
        <position position="251"/>
    </location>
</feature>
<feature type="modified residue" description="Phosphoserine" evidence="5">
    <location>
        <position position="253"/>
    </location>
</feature>
<feature type="modified residue" description="Phosphoserine" evidence="5">
    <location>
        <position position="366"/>
    </location>
</feature>
<feature type="modified residue" description="Phosphothreonine" evidence="5">
    <location>
        <position position="369"/>
    </location>
</feature>
<feature type="modified residue" description="Phosphoserine" evidence="1">
    <location>
        <position position="385"/>
    </location>
</feature>
<feature type="modified residue" description="Phosphothreonine" evidence="5">
    <location>
        <position position="433"/>
    </location>
</feature>
<feature type="modified residue" description="Phosphoserine" evidence="5">
    <location>
        <position position="435"/>
    </location>
</feature>
<feature type="modified residue" description="Phosphoserine" evidence="5">
    <location>
        <position position="449"/>
    </location>
</feature>
<feature type="modified residue" description="Phosphoserine" evidence="5">
    <location>
        <position position="471"/>
    </location>
</feature>
<feature type="modified residue" description="Phosphotyrosine" evidence="5">
    <location>
        <position position="474"/>
    </location>
</feature>
<dbReference type="EMBL" id="CU329670">
    <property type="protein sequence ID" value="CAB11234.2"/>
    <property type="molecule type" value="Genomic_DNA"/>
</dbReference>
<dbReference type="PIR" id="T38023">
    <property type="entry name" value="T38023"/>
</dbReference>
<dbReference type="RefSeq" id="NP_594789.2">
    <property type="nucleotide sequence ID" value="NM_001020217.2"/>
</dbReference>
<dbReference type="SMR" id="O13870"/>
<dbReference type="BioGRID" id="278602">
    <property type="interactions" value="195"/>
</dbReference>
<dbReference type="ComplexPortal" id="CPX-25774">
    <property type="entry name" value="CCR4-NOT mRNA deadenylase complex"/>
</dbReference>
<dbReference type="FunCoup" id="O13870">
    <property type="interactions" value="588"/>
</dbReference>
<dbReference type="STRING" id="284812.O13870"/>
<dbReference type="iPTMnet" id="O13870"/>
<dbReference type="PaxDb" id="4896-SPAC1B3.05.1"/>
<dbReference type="EnsemblFungi" id="SPAC1B3.05.1">
    <property type="protein sequence ID" value="SPAC1B3.05.1:pep"/>
    <property type="gene ID" value="SPAC1B3.05"/>
</dbReference>
<dbReference type="GeneID" id="2542126"/>
<dbReference type="KEGG" id="spo:2542126"/>
<dbReference type="PomBase" id="SPAC1B3.05">
    <property type="gene designation" value="not3"/>
</dbReference>
<dbReference type="VEuPathDB" id="FungiDB:SPAC1B3.05"/>
<dbReference type="eggNOG" id="KOG2150">
    <property type="taxonomic scope" value="Eukaryota"/>
</dbReference>
<dbReference type="HOGENOM" id="CLU_013819_3_0_1"/>
<dbReference type="InParanoid" id="O13870"/>
<dbReference type="OMA" id="YKPQTPY"/>
<dbReference type="PRO" id="PR:O13870"/>
<dbReference type="Proteomes" id="UP000002485">
    <property type="component" value="Chromosome I"/>
</dbReference>
<dbReference type="GO" id="GO:0030014">
    <property type="term" value="C:CCR4-NOT complex"/>
    <property type="evidence" value="ECO:0000314"/>
    <property type="project" value="PomBase"/>
</dbReference>
<dbReference type="GO" id="GO:0030015">
    <property type="term" value="C:CCR4-NOT core complex"/>
    <property type="evidence" value="ECO:0000314"/>
    <property type="project" value="PomBase"/>
</dbReference>
<dbReference type="GO" id="GO:0005829">
    <property type="term" value="C:cytosol"/>
    <property type="evidence" value="ECO:0007005"/>
    <property type="project" value="PomBase"/>
</dbReference>
<dbReference type="GO" id="GO:0005634">
    <property type="term" value="C:nucleus"/>
    <property type="evidence" value="ECO:0007669"/>
    <property type="project" value="UniProtKB-SubCell"/>
</dbReference>
<dbReference type="GO" id="GO:0000932">
    <property type="term" value="C:P-body"/>
    <property type="evidence" value="ECO:0000318"/>
    <property type="project" value="GO_Central"/>
</dbReference>
<dbReference type="GO" id="GO:0000289">
    <property type="term" value="P:nuclear-transcribed mRNA poly(A) tail shortening"/>
    <property type="evidence" value="ECO:0000314"/>
    <property type="project" value="PomBase"/>
</dbReference>
<dbReference type="GO" id="GO:0006355">
    <property type="term" value="P:regulation of DNA-templated transcription"/>
    <property type="evidence" value="ECO:0007669"/>
    <property type="project" value="InterPro"/>
</dbReference>
<dbReference type="FunFam" id="2.30.30.1020:FF:000006">
    <property type="entry name" value="CCR4-NOT transcription complex, subunit 3"/>
    <property type="match status" value="1"/>
</dbReference>
<dbReference type="Gene3D" id="2.30.30.1020">
    <property type="entry name" value="CCR4-NOT complex subunit 2/3/5, C-terminal domain"/>
    <property type="match status" value="1"/>
</dbReference>
<dbReference type="InterPro" id="IPR038635">
    <property type="entry name" value="CCR4-NOT_su2/3/5_C_sf"/>
</dbReference>
<dbReference type="InterPro" id="IPR012270">
    <property type="entry name" value="CCR4-NOT_su3/5"/>
</dbReference>
<dbReference type="InterPro" id="IPR040168">
    <property type="entry name" value="Not2/3/5"/>
</dbReference>
<dbReference type="InterPro" id="IPR007282">
    <property type="entry name" value="NOT2/3/5_C"/>
</dbReference>
<dbReference type="InterPro" id="IPR007207">
    <property type="entry name" value="Not_N"/>
</dbReference>
<dbReference type="PANTHER" id="PTHR23326">
    <property type="entry name" value="CCR4 NOT-RELATED"/>
    <property type="match status" value="1"/>
</dbReference>
<dbReference type="Pfam" id="PF04153">
    <property type="entry name" value="NOT2_3_5_C"/>
    <property type="match status" value="1"/>
</dbReference>
<dbReference type="Pfam" id="PF04065">
    <property type="entry name" value="Not3"/>
    <property type="match status" value="1"/>
</dbReference>
<dbReference type="PIRSF" id="PIRSF005290">
    <property type="entry name" value="NOT_su_3_5"/>
    <property type="match status" value="1"/>
</dbReference>
<organism>
    <name type="scientific">Schizosaccharomyces pombe (strain 972 / ATCC 24843)</name>
    <name type="common">Fission yeast</name>
    <dbReference type="NCBI Taxonomy" id="284812"/>
    <lineage>
        <taxon>Eukaryota</taxon>
        <taxon>Fungi</taxon>
        <taxon>Dikarya</taxon>
        <taxon>Ascomycota</taxon>
        <taxon>Taphrinomycotina</taxon>
        <taxon>Schizosaccharomycetes</taxon>
        <taxon>Schizosaccharomycetales</taxon>
        <taxon>Schizosaccharomycetaceae</taxon>
        <taxon>Schizosaccharomyces</taxon>
    </lineage>
</organism>
<accession>O13870</accession>
<gene>
    <name type="primary">not3</name>
    <name type="ORF">SPAC1B3.05</name>
</gene>
<proteinExistence type="evidence at protein level"/>
<evidence type="ECO:0000250" key="1"/>
<evidence type="ECO:0000255" key="2"/>
<evidence type="ECO:0000256" key="3">
    <source>
        <dbReference type="SAM" id="MobiDB-lite"/>
    </source>
</evidence>
<evidence type="ECO:0000269" key="4">
    <source>
    </source>
</evidence>
<evidence type="ECO:0000269" key="5">
    <source>
    </source>
</evidence>
<evidence type="ECO:0000305" key="6"/>
<evidence type="ECO:0000305" key="7">
    <source>
    </source>
</evidence>